<proteinExistence type="inferred from homology"/>
<comment type="function">
    <text evidence="1">Facilitates the functional incorporation of the urease nickel metallocenter. This process requires GTP hydrolysis, probably effectuated by UreG.</text>
</comment>
<comment type="subunit">
    <text evidence="1">Homodimer. UreD, UreF and UreG form a complex that acts as a GTP-hydrolysis-dependent molecular chaperone, activating the urease apoprotein by helping to assemble the nickel containing metallocenter of UreC. The UreE protein probably delivers the nickel.</text>
</comment>
<comment type="subcellular location">
    <subcellularLocation>
        <location evidence="1">Cytoplasm</location>
    </subcellularLocation>
</comment>
<comment type="similarity">
    <text evidence="1">Belongs to the SIMIBI class G3E GTPase family. UreG subfamily.</text>
</comment>
<evidence type="ECO:0000255" key="1">
    <source>
        <dbReference type="HAMAP-Rule" id="MF_01389"/>
    </source>
</evidence>
<accession>A4YF54</accession>
<gene>
    <name evidence="1" type="primary">ureG</name>
    <name type="ordered locus">Msed_0884</name>
</gene>
<dbReference type="EMBL" id="CP000682">
    <property type="protein sequence ID" value="ABP95056.1"/>
    <property type="molecule type" value="Genomic_DNA"/>
</dbReference>
<dbReference type="RefSeq" id="WP_012020843.1">
    <property type="nucleotide sequence ID" value="NZ_CP139956.1"/>
</dbReference>
<dbReference type="SMR" id="A4YF54"/>
<dbReference type="STRING" id="399549.Msed_0884"/>
<dbReference type="GeneID" id="97614041"/>
<dbReference type="KEGG" id="mse:Msed_0884"/>
<dbReference type="eggNOG" id="arCOG01231">
    <property type="taxonomic scope" value="Archaea"/>
</dbReference>
<dbReference type="HOGENOM" id="CLU_072144_1_0_2"/>
<dbReference type="Proteomes" id="UP000000242">
    <property type="component" value="Chromosome"/>
</dbReference>
<dbReference type="GO" id="GO:0005737">
    <property type="term" value="C:cytoplasm"/>
    <property type="evidence" value="ECO:0007669"/>
    <property type="project" value="UniProtKB-SubCell"/>
</dbReference>
<dbReference type="GO" id="GO:0005525">
    <property type="term" value="F:GTP binding"/>
    <property type="evidence" value="ECO:0007669"/>
    <property type="project" value="UniProtKB-KW"/>
</dbReference>
<dbReference type="GO" id="GO:0003924">
    <property type="term" value="F:GTPase activity"/>
    <property type="evidence" value="ECO:0007669"/>
    <property type="project" value="InterPro"/>
</dbReference>
<dbReference type="GO" id="GO:0016151">
    <property type="term" value="F:nickel cation binding"/>
    <property type="evidence" value="ECO:0007669"/>
    <property type="project" value="UniProtKB-UniRule"/>
</dbReference>
<dbReference type="GO" id="GO:0043419">
    <property type="term" value="P:urea catabolic process"/>
    <property type="evidence" value="ECO:0007669"/>
    <property type="project" value="InterPro"/>
</dbReference>
<dbReference type="Gene3D" id="3.40.50.300">
    <property type="entry name" value="P-loop containing nucleotide triphosphate hydrolases"/>
    <property type="match status" value="1"/>
</dbReference>
<dbReference type="HAMAP" id="MF_01389">
    <property type="entry name" value="UreG"/>
    <property type="match status" value="1"/>
</dbReference>
<dbReference type="InterPro" id="IPR003495">
    <property type="entry name" value="CobW/HypB/UreG_nucleotide-bd"/>
</dbReference>
<dbReference type="InterPro" id="IPR027417">
    <property type="entry name" value="P-loop_NTPase"/>
</dbReference>
<dbReference type="InterPro" id="IPR004400">
    <property type="entry name" value="UreG"/>
</dbReference>
<dbReference type="NCBIfam" id="TIGR00101">
    <property type="entry name" value="ureG"/>
    <property type="match status" value="1"/>
</dbReference>
<dbReference type="PANTHER" id="PTHR31715">
    <property type="entry name" value="UREASE ACCESSORY PROTEIN G"/>
    <property type="match status" value="1"/>
</dbReference>
<dbReference type="PANTHER" id="PTHR31715:SF0">
    <property type="entry name" value="UREASE ACCESSORY PROTEIN G"/>
    <property type="match status" value="1"/>
</dbReference>
<dbReference type="Pfam" id="PF02492">
    <property type="entry name" value="cobW"/>
    <property type="match status" value="1"/>
</dbReference>
<dbReference type="PIRSF" id="PIRSF005624">
    <property type="entry name" value="Ni-bind_GTPase"/>
    <property type="match status" value="1"/>
</dbReference>
<dbReference type="SUPFAM" id="SSF52540">
    <property type="entry name" value="P-loop containing nucleoside triphosphate hydrolases"/>
    <property type="match status" value="1"/>
</dbReference>
<name>UREG_METS5</name>
<reference key="1">
    <citation type="journal article" date="2008" name="Appl. Environ. Microbiol.">
        <title>The genome sequence of the metal-mobilizing, extremely thermoacidophilic archaeon Metallosphaera sedula provides insights into bioleaching-associated metabolism.</title>
        <authorList>
            <person name="Auernik K.S."/>
            <person name="Maezato Y."/>
            <person name="Blum P.H."/>
            <person name="Kelly R.M."/>
        </authorList>
    </citation>
    <scope>NUCLEOTIDE SEQUENCE [LARGE SCALE GENOMIC DNA]</scope>
    <source>
        <strain>ATCC 51363 / DSM 5348 / JCM 9185 / NBRC 15509 / TH2</strain>
    </source>
</reference>
<organism>
    <name type="scientific">Metallosphaera sedula (strain ATCC 51363 / DSM 5348 / JCM 9185 / NBRC 15509 / TH2)</name>
    <dbReference type="NCBI Taxonomy" id="399549"/>
    <lineage>
        <taxon>Archaea</taxon>
        <taxon>Thermoproteota</taxon>
        <taxon>Thermoprotei</taxon>
        <taxon>Sulfolobales</taxon>
        <taxon>Sulfolobaceae</taxon>
        <taxon>Metallosphaera</taxon>
    </lineage>
</organism>
<feature type="chain" id="PRO_0000347461" description="Urease accessory protein UreG">
    <location>
        <begin position="1"/>
        <end position="211"/>
    </location>
</feature>
<feature type="binding site" evidence="1">
    <location>
        <begin position="8"/>
        <end position="15"/>
    </location>
    <ligand>
        <name>GTP</name>
        <dbReference type="ChEBI" id="CHEBI:37565"/>
    </ligand>
</feature>
<sequence length="211" mass="23093">MIKVGILGPVGSGKTSLIEFLAKEYSERGIKVGILTNDVVSAYDAMRIYHNLVERLRILPRENVLGLVTGGCPHTAIREDPSLNLRALETLEERANPDLVFIESGGDNVMSTFSSSLADFTIFVLDTSAGDKYPGKGGIGITESDLLVVNKIDLAPYVQADLNKMREDSLRVRRGKPSVFISLKTGEGTRELIRILDEELGLERVFGNKGQ</sequence>
<keyword id="KW-0143">Chaperone</keyword>
<keyword id="KW-0963">Cytoplasm</keyword>
<keyword id="KW-0342">GTP-binding</keyword>
<keyword id="KW-0996">Nickel insertion</keyword>
<keyword id="KW-0547">Nucleotide-binding</keyword>
<keyword id="KW-1185">Reference proteome</keyword>
<protein>
    <recommendedName>
        <fullName evidence="1">Urease accessory protein UreG</fullName>
    </recommendedName>
</protein>